<organism>
    <name type="scientific">Mus musculus</name>
    <name type="common">Mouse</name>
    <dbReference type="NCBI Taxonomy" id="10090"/>
    <lineage>
        <taxon>Eukaryota</taxon>
        <taxon>Metazoa</taxon>
        <taxon>Chordata</taxon>
        <taxon>Craniata</taxon>
        <taxon>Vertebrata</taxon>
        <taxon>Euteleostomi</taxon>
        <taxon>Mammalia</taxon>
        <taxon>Eutheria</taxon>
        <taxon>Euarchontoglires</taxon>
        <taxon>Glires</taxon>
        <taxon>Rodentia</taxon>
        <taxon>Myomorpha</taxon>
        <taxon>Muroidea</taxon>
        <taxon>Muridae</taxon>
        <taxon>Murinae</taxon>
        <taxon>Mus</taxon>
        <taxon>Mus</taxon>
    </lineage>
</organism>
<name>MUG2_MOUSE</name>
<protein>
    <recommendedName>
        <fullName>Murinoglobulin-2</fullName>
        <shortName>MuG2</shortName>
    </recommendedName>
</protein>
<sequence length="1451" mass="162382">MWKSRRAQLCLFSVLLAFLPSASSLNGDSKYMVLVPSQLYTETPEKICLHLYHLNETVTVTASLVSQTGRRNLFDELVVDKDLFQCVSFIIPTLNSPDEEEFLYVDIKGPTHEFSKRNAVLVKNKESVVFVQTDKPVYKPGQSVKFRVVSMDKTLRPLNELLPLAYIEDPKKNRIMQWRDIKTENGLKQMSFSLAAEPIQGPYKIVVHKQSGVKEEHSFTVMEFVLPRFNVDLKVPNAISVNDEVLQVTVCGKYTYGKPVPGQVKISICHETEAGCKEVNSKLDNNGCSTQEVNITELQSKKRNYEVQLFHVNATVTEEGTGLEFNGYGTTKIERITNKLIFLKADSHFRHGIPFFVKVRLVDIKGDPIPNERVFIKAQVLGYTSATTTDQHGLAKFSIDTAGFSGSSLHIKVNHKGKDSCYFFYCMEERYASAEHVAYAVYSLSKSYIYLVKETSSILPCNQIHTVQAHFILKGDLGVLKELVFYYLVMAQGSIIQTGNHTHQVEPGEAPVKGNFDLEIPVEFSMAPMAKMLIYTILPDGEVIADSVNFEIEKCLRNKVDLSFSSSQSLPASQTRLQVTASPQSLCGLRAVDQSVLLLKPEDELSPSWIYNLPGMQHNKFIPSSSLSEDREDCILYSSWVAEKHTDWVPHGREKDVYRYVEDMDLKAFTNLKIKLPKICFDSAPMSGPRGKFDLAFSSEVSGTLQKGSSKRPQPEEPPREDPPPKDPLAETIRKYFPETWVWDIVTVNSTGVAEVEMTVPDTITEWKAGALCLSNDTGLGLSSVVPLQAFQPFFVEVSLPYSVVRGEAFMLKATVMNYLPTSMRMSVQLEASPDFTAVPVGDDHDSYCLSANGRHTSSWLVTPKSLGNVNFSVSVEAQQSSEPCGSEVATVPETGRKDTVVKVLIVEPEGIKQEHTFNSLFCASDAEISEKMSLVLPPTVVKDSARAHFSVMGDILSSAIKNTQNLLHMPYGCGEQNMVLFAPNIYVLKYLDKTQQLTQKIKTKALGFLRAGYQRELNYKHKDGSYSAFGDQNGEREGNTWLTAFVLKSFAQARAFIFIDESHITHAFTWLSQQQKDNGCFRSSGSLFHNDIKHPVVSKALSCLESSWKTIEQGRNANFVYTKALMAYAFALAGNQDKRNEILKSLDEEAIKEDNSIHWERPQKPRKSEHNLYKPQASSVEVEMNAYVVLARLTAQPAPSPEDLTLSRSTIMWLTKQQNSNGGFSSTQDTVVALDALSKYGAVTFSRRQKTSLVTIQSTGSFSQKFQVENSNCLLLQQVPLPDIPGDYTISVSGEGCVYAQTTLRYNMHLEKQQSAFALRVQTVPLTCNNPKGHNSFQISLEISYTGSRPASNMVIADVKMLSGFIPLKPTVKKLERLEHISRTEVSNNNVLLYLDQVTNQTLAFSFIIQQDISVRNLQPAIVKVYDYYETDEVAYAEYSSPCSSDKQNV</sequence>
<comment type="function">
    <text>A proteinase activates the inhibitor by specific proteolysis in the bait region, which, by an unknown mechanism leads to reaction at the cysteinyl-glutamyl internal thiol ester site and to a conformational change, whereby the proteinase is trapped and/or covalently bound to the inhibitor. While in the tetrameric proteinase inhibitors steric inhibition is sufficiently strong, monomeric forms need a covalent linkage between the activated glutamyl residue of the original thiol ester and a terminal amino group of a lysine or another nucleophilic group on the proteinase, for inhibition to be effective.</text>
</comment>
<comment type="subunit">
    <text>Monomer.</text>
</comment>
<comment type="subcellular location">
    <subcellularLocation>
        <location>Secreted</location>
    </subcellularLocation>
</comment>
<comment type="tissue specificity">
    <text>Plasma.</text>
</comment>
<comment type="similarity">
    <text evidence="4">Belongs to the protease inhibitor I39 (alpha-2-macroglobulin) family.</text>
</comment>
<reference key="1">
    <citation type="journal article" date="1991" name="J. Biol. Chem.">
        <title>Molecular characterization of the murinoglobulins.</title>
        <authorList>
            <person name="Overbergh L."/>
            <person name="Torrekens S."/>
            <person name="van Leuven F."/>
            <person name="van den Berghe H."/>
        </authorList>
    </citation>
    <scope>NUCLEOTIDE SEQUENCE [MRNA]</scope>
    <source>
        <tissue>Liver</tissue>
    </source>
</reference>
<reference key="2">
    <citation type="journal article" date="2009" name="PLoS Biol.">
        <title>Lineage-specific biology revealed by a finished genome assembly of the mouse.</title>
        <authorList>
            <person name="Church D.M."/>
            <person name="Goodstadt L."/>
            <person name="Hillier L.W."/>
            <person name="Zody M.C."/>
            <person name="Goldstein S."/>
            <person name="She X."/>
            <person name="Bult C.J."/>
            <person name="Agarwala R."/>
            <person name="Cherry J.L."/>
            <person name="DiCuccio M."/>
            <person name="Hlavina W."/>
            <person name="Kapustin Y."/>
            <person name="Meric P."/>
            <person name="Maglott D."/>
            <person name="Birtle Z."/>
            <person name="Marques A.C."/>
            <person name="Graves T."/>
            <person name="Zhou S."/>
            <person name="Teague B."/>
            <person name="Potamousis K."/>
            <person name="Churas C."/>
            <person name="Place M."/>
            <person name="Herschleb J."/>
            <person name="Runnheim R."/>
            <person name="Forrest D."/>
            <person name="Amos-Landgraf J."/>
            <person name="Schwartz D.C."/>
            <person name="Cheng Z."/>
            <person name="Lindblad-Toh K."/>
            <person name="Eichler E.E."/>
            <person name="Ponting C.P."/>
        </authorList>
    </citation>
    <scope>NUCLEOTIDE SEQUENCE [LARGE SCALE GENOMIC DNA]</scope>
    <source>
        <strain>C57BL/6J</strain>
    </source>
</reference>
<reference key="3">
    <citation type="journal article" date="2010" name="Cell">
        <title>A tissue-specific atlas of mouse protein phosphorylation and expression.</title>
        <authorList>
            <person name="Huttlin E.L."/>
            <person name="Jedrychowski M.P."/>
            <person name="Elias J.E."/>
            <person name="Goswami T."/>
            <person name="Rad R."/>
            <person name="Beausoleil S.A."/>
            <person name="Villen J."/>
            <person name="Haas W."/>
            <person name="Sowa M.E."/>
            <person name="Gygi S.P."/>
        </authorList>
    </citation>
    <scope>IDENTIFICATION BY MASS SPECTROMETRY [LARGE SCALE ANALYSIS]</scope>
    <source>
        <tissue>Brown adipose tissue</tissue>
        <tissue>Lung</tissue>
    </source>
</reference>
<accession>P28666</accession>
<evidence type="ECO:0000250" key="1"/>
<evidence type="ECO:0000255" key="2"/>
<evidence type="ECO:0000256" key="3">
    <source>
        <dbReference type="SAM" id="MobiDB-lite"/>
    </source>
</evidence>
<evidence type="ECO:0000305" key="4"/>
<keyword id="KW-0082">Bait region</keyword>
<keyword id="KW-1015">Disulfide bond</keyword>
<keyword id="KW-0325">Glycoprotein</keyword>
<keyword id="KW-0646">Protease inhibitor</keyword>
<keyword id="KW-1185">Reference proteome</keyword>
<keyword id="KW-0964">Secreted</keyword>
<keyword id="KW-0722">Serine protease inhibitor</keyword>
<keyword id="KW-0732">Signal</keyword>
<keyword id="KW-0882">Thioester bond</keyword>
<gene>
    <name type="primary">Mug2</name>
    <name type="synonym">Mug-2</name>
</gene>
<proteinExistence type="evidence at protein level"/>
<feature type="signal peptide" evidence="1">
    <location>
        <begin position="1"/>
        <end position="27"/>
    </location>
</feature>
<feature type="chain" id="PRO_0000000060" description="Murinoglobulin-2">
    <location>
        <begin position="28"/>
        <end position="1451"/>
    </location>
</feature>
<feature type="region of interest" description="Bait region">
    <location>
        <begin position="677"/>
        <end position="734"/>
    </location>
</feature>
<feature type="region of interest" description="Disordered" evidence="3">
    <location>
        <begin position="703"/>
        <end position="728"/>
    </location>
</feature>
<feature type="compositionally biased region" description="Basic and acidic residues" evidence="3">
    <location>
        <begin position="713"/>
        <end position="728"/>
    </location>
</feature>
<feature type="glycosylation site" description="N-linked (GlcNAc...) asparagine" evidence="2">
    <location>
        <position position="55"/>
    </location>
</feature>
<feature type="glycosylation site" description="N-linked (GlcNAc...) asparagine" evidence="2">
    <location>
        <position position="294"/>
    </location>
</feature>
<feature type="glycosylation site" description="N-linked (GlcNAc...) asparagine" evidence="2">
    <location>
        <position position="313"/>
    </location>
</feature>
<feature type="glycosylation site" description="N-linked (GlcNAc...) asparagine" evidence="2">
    <location>
        <position position="500"/>
    </location>
</feature>
<feature type="glycosylation site" description="N-linked (GlcNAc...) asparagine" evidence="2">
    <location>
        <position position="749"/>
    </location>
</feature>
<feature type="glycosylation site" description="N-linked (GlcNAc...) asparagine" evidence="2">
    <location>
        <position position="776"/>
    </location>
</feature>
<feature type="glycosylation site" description="N-linked (GlcNAc...) asparagine" evidence="2">
    <location>
        <position position="871"/>
    </location>
</feature>
<feature type="glycosylation site" description="N-linked (GlcNAc...) asparagine" evidence="2">
    <location>
        <position position="1401"/>
    </location>
</feature>
<feature type="disulfide bond" evidence="1">
    <location>
        <begin position="48"/>
        <end position="86"/>
    </location>
</feature>
<feature type="disulfide bond" evidence="1">
    <location>
        <begin position="251"/>
        <end position="276"/>
    </location>
</feature>
<feature type="disulfide bond" evidence="1">
    <location>
        <begin position="269"/>
        <end position="288"/>
    </location>
</feature>
<feature type="disulfide bond" evidence="1">
    <location>
        <begin position="461"/>
        <end position="555"/>
    </location>
</feature>
<feature type="disulfide bond" evidence="1">
    <location>
        <begin position="587"/>
        <end position="773"/>
    </location>
</feature>
<feature type="disulfide bond" evidence="1">
    <location>
        <begin position="634"/>
        <end position="680"/>
    </location>
</feature>
<feature type="disulfide bond" evidence="1">
    <location>
        <begin position="849"/>
        <end position="885"/>
    </location>
</feature>
<feature type="disulfide bond" evidence="1">
    <location>
        <begin position="923"/>
        <end position="1274"/>
    </location>
</feature>
<feature type="disulfide bond" evidence="1">
    <location>
        <begin position="1081"/>
        <end position="1104"/>
    </location>
</feature>
<feature type="disulfide bond" evidence="1">
    <location>
        <begin position="1298"/>
        <end position="1444"/>
    </location>
</feature>
<feature type="cross-link" description="Isoglutamyl cysteine thioester (Cys-Gln)" evidence="1">
    <location>
        <begin position="974"/>
        <end position="977"/>
    </location>
</feature>
<feature type="sequence conflict" description="In Ref. 1; AAA73041." evidence="4" ref="1">
    <original>A</original>
    <variation>T</variation>
    <location>
        <position position="386"/>
    </location>
</feature>
<feature type="sequence conflict" description="In Ref. 1; AAA73041." evidence="4" ref="1">
    <original>E</original>
    <variation>A</variation>
    <location>
        <position position="894"/>
    </location>
</feature>
<feature type="sequence conflict" description="In Ref. 1; AAA73041." evidence="4" ref="1">
    <original>V</original>
    <variation>I</variation>
    <location>
        <position position="1181"/>
    </location>
</feature>
<dbReference type="EMBL" id="M65238">
    <property type="protein sequence ID" value="AAA73041.1"/>
    <property type="molecule type" value="mRNA"/>
</dbReference>
<dbReference type="EMBL" id="AC153582">
    <property type="status" value="NOT_ANNOTATED_CDS"/>
    <property type="molecule type" value="Genomic_DNA"/>
</dbReference>
<dbReference type="EMBL" id="AC153838">
    <property type="status" value="NOT_ANNOTATED_CDS"/>
    <property type="molecule type" value="Genomic_DNA"/>
</dbReference>
<dbReference type="EMBL" id="AC156279">
    <property type="status" value="NOT_ANNOTATED_CDS"/>
    <property type="molecule type" value="Genomic_DNA"/>
</dbReference>
<dbReference type="CCDS" id="CCDS39619.1"/>
<dbReference type="PIR" id="B41185">
    <property type="entry name" value="B41185"/>
</dbReference>
<dbReference type="RefSeq" id="NP_032672.2">
    <property type="nucleotide sequence ID" value="NM_008646.3"/>
</dbReference>
<dbReference type="SMR" id="P28666"/>
<dbReference type="BioGRID" id="201614">
    <property type="interactions" value="7"/>
</dbReference>
<dbReference type="FunCoup" id="P28666">
    <property type="interactions" value="105"/>
</dbReference>
<dbReference type="STRING" id="10090.ENSMUSP00000080469"/>
<dbReference type="MEROPS" id="I39.005"/>
<dbReference type="CarbonylDB" id="P28666"/>
<dbReference type="GlyCosmos" id="P28666">
    <property type="glycosylation" value="8 sites, No reported glycans"/>
</dbReference>
<dbReference type="GlyGen" id="P28666">
    <property type="glycosylation" value="8 sites, 1 N-linked glycan (1 site)"/>
</dbReference>
<dbReference type="iPTMnet" id="P28666"/>
<dbReference type="PhosphoSitePlus" id="P28666"/>
<dbReference type="SwissPalm" id="P28666"/>
<dbReference type="CPTAC" id="non-CPTAC-3657"/>
<dbReference type="jPOST" id="P28666"/>
<dbReference type="PaxDb" id="10090-ENSMUSP00000080469"/>
<dbReference type="PeptideAtlas" id="P28666"/>
<dbReference type="ProteomicsDB" id="287331"/>
<dbReference type="DNASU" id="17837"/>
<dbReference type="Ensembl" id="ENSMUST00000081777.8">
    <property type="protein sequence ID" value="ENSMUSP00000080469.7"/>
    <property type="gene ID" value="ENSMUSG00000030131.9"/>
</dbReference>
<dbReference type="GeneID" id="17837"/>
<dbReference type="KEGG" id="mmu:17837"/>
<dbReference type="UCSC" id="uc009dos.1">
    <property type="organism name" value="mouse"/>
</dbReference>
<dbReference type="AGR" id="MGI:99836"/>
<dbReference type="CTD" id="17837"/>
<dbReference type="MGI" id="MGI:99836">
    <property type="gene designation" value="Mug2"/>
</dbReference>
<dbReference type="VEuPathDB" id="HostDB:ENSMUSG00000030131"/>
<dbReference type="eggNOG" id="KOG1366">
    <property type="taxonomic scope" value="Eukaryota"/>
</dbReference>
<dbReference type="GeneTree" id="ENSGT00940000164557"/>
<dbReference type="HOGENOM" id="CLU_001634_0_1_1"/>
<dbReference type="InParanoid" id="P28666"/>
<dbReference type="OMA" id="ISAEPHY"/>
<dbReference type="OrthoDB" id="9998011at2759"/>
<dbReference type="PhylomeDB" id="P28666"/>
<dbReference type="TreeFam" id="TF313285"/>
<dbReference type="BioGRID-ORCS" id="17837">
    <property type="hits" value="4 hits in 75 CRISPR screens"/>
</dbReference>
<dbReference type="PRO" id="PR:P28666"/>
<dbReference type="Proteomes" id="UP000000589">
    <property type="component" value="Chromosome 6"/>
</dbReference>
<dbReference type="RNAct" id="P28666">
    <property type="molecule type" value="protein"/>
</dbReference>
<dbReference type="Bgee" id="ENSMUSG00000030131">
    <property type="expression patterns" value="Expressed in liver and 14 other cell types or tissues"/>
</dbReference>
<dbReference type="GO" id="GO:0005615">
    <property type="term" value="C:extracellular space"/>
    <property type="evidence" value="ECO:0007669"/>
    <property type="project" value="InterPro"/>
</dbReference>
<dbReference type="GO" id="GO:0004867">
    <property type="term" value="F:serine-type endopeptidase inhibitor activity"/>
    <property type="evidence" value="ECO:0007669"/>
    <property type="project" value="UniProtKB-KW"/>
</dbReference>
<dbReference type="CDD" id="cd02897">
    <property type="entry name" value="A2M_2"/>
    <property type="match status" value="1"/>
</dbReference>
<dbReference type="FunFam" id="2.60.40.10:FF:000312">
    <property type="entry name" value="Alpha-2-macroglobulin like 1"/>
    <property type="match status" value="1"/>
</dbReference>
<dbReference type="FunFam" id="1.50.10.20:FF:000001">
    <property type="entry name" value="CD109 isoform 1"/>
    <property type="match status" value="1"/>
</dbReference>
<dbReference type="FunFam" id="2.60.40.1930:FF:000001">
    <property type="entry name" value="CD109 isoform 3"/>
    <property type="match status" value="1"/>
</dbReference>
<dbReference type="FunFam" id="2.60.40.10:FF:001760">
    <property type="entry name" value="Murinoglobulin-1"/>
    <property type="match status" value="1"/>
</dbReference>
<dbReference type="FunFam" id="2.20.130.20:FF:000004">
    <property type="entry name" value="PZP, alpha-2-macroglobulin like"/>
    <property type="match status" value="1"/>
</dbReference>
<dbReference type="FunFam" id="2.60.40.1930:FF:000002">
    <property type="entry name" value="PZP, alpha-2-macroglobulin like"/>
    <property type="match status" value="1"/>
</dbReference>
<dbReference type="FunFam" id="2.60.40.690:FF:000001">
    <property type="entry name" value="PZP, alpha-2-macroglobulin like"/>
    <property type="match status" value="1"/>
</dbReference>
<dbReference type="Gene3D" id="1.50.10.20">
    <property type="match status" value="2"/>
</dbReference>
<dbReference type="Gene3D" id="2.20.130.20">
    <property type="match status" value="1"/>
</dbReference>
<dbReference type="Gene3D" id="2.60.120.1540">
    <property type="match status" value="2"/>
</dbReference>
<dbReference type="Gene3D" id="2.60.40.1930">
    <property type="match status" value="2"/>
</dbReference>
<dbReference type="Gene3D" id="2.60.40.1940">
    <property type="match status" value="1"/>
</dbReference>
<dbReference type="Gene3D" id="6.20.50.160">
    <property type="match status" value="1"/>
</dbReference>
<dbReference type="Gene3D" id="2.60.40.690">
    <property type="entry name" value="Alpha-macroglobulin, receptor-binding domain"/>
    <property type="match status" value="1"/>
</dbReference>
<dbReference type="Gene3D" id="2.60.40.10">
    <property type="entry name" value="Immunoglobulins"/>
    <property type="match status" value="2"/>
</dbReference>
<dbReference type="InterPro" id="IPR009048">
    <property type="entry name" value="A-macroglobulin_rcpt-bd"/>
</dbReference>
<dbReference type="InterPro" id="IPR036595">
    <property type="entry name" value="A-macroglobulin_rcpt-bd_sf"/>
</dbReference>
<dbReference type="InterPro" id="IPR050473">
    <property type="entry name" value="A2M/Complement_sys"/>
</dbReference>
<dbReference type="InterPro" id="IPR011625">
    <property type="entry name" value="A2M_N_BRD"/>
</dbReference>
<dbReference type="InterPro" id="IPR041813">
    <property type="entry name" value="A2M_TED"/>
</dbReference>
<dbReference type="InterPro" id="IPR047565">
    <property type="entry name" value="Alpha-macroglob_thiol-ester_cl"/>
</dbReference>
<dbReference type="InterPro" id="IPR011626">
    <property type="entry name" value="Alpha-macroglobulin_TED"/>
</dbReference>
<dbReference type="InterPro" id="IPR013783">
    <property type="entry name" value="Ig-like_fold"/>
</dbReference>
<dbReference type="InterPro" id="IPR014756">
    <property type="entry name" value="Ig_E-set"/>
</dbReference>
<dbReference type="InterPro" id="IPR001599">
    <property type="entry name" value="Macroglobln_a2"/>
</dbReference>
<dbReference type="InterPro" id="IPR019742">
    <property type="entry name" value="MacrogloblnA2_CS"/>
</dbReference>
<dbReference type="InterPro" id="IPR002890">
    <property type="entry name" value="MG2"/>
</dbReference>
<dbReference type="InterPro" id="IPR041555">
    <property type="entry name" value="MG3"/>
</dbReference>
<dbReference type="InterPro" id="IPR040839">
    <property type="entry name" value="MG4"/>
</dbReference>
<dbReference type="InterPro" id="IPR008930">
    <property type="entry name" value="Terpenoid_cyclase/PrenylTrfase"/>
</dbReference>
<dbReference type="InterPro" id="IPR010916">
    <property type="entry name" value="TonB_box_CS"/>
</dbReference>
<dbReference type="PANTHER" id="PTHR11412">
    <property type="entry name" value="MACROGLOBULIN / COMPLEMENT"/>
    <property type="match status" value="1"/>
</dbReference>
<dbReference type="PANTHER" id="PTHR11412:SF133">
    <property type="entry name" value="MURINOGLOBULIN-1-RELATED"/>
    <property type="match status" value="1"/>
</dbReference>
<dbReference type="Pfam" id="PF00207">
    <property type="entry name" value="A2M"/>
    <property type="match status" value="1"/>
</dbReference>
<dbReference type="Pfam" id="PF07703">
    <property type="entry name" value="A2M_BRD"/>
    <property type="match status" value="1"/>
</dbReference>
<dbReference type="Pfam" id="PF07677">
    <property type="entry name" value="A2M_recep"/>
    <property type="match status" value="1"/>
</dbReference>
<dbReference type="Pfam" id="PF01835">
    <property type="entry name" value="MG2"/>
    <property type="match status" value="1"/>
</dbReference>
<dbReference type="Pfam" id="PF17791">
    <property type="entry name" value="MG3"/>
    <property type="match status" value="1"/>
</dbReference>
<dbReference type="Pfam" id="PF17789">
    <property type="entry name" value="MG4"/>
    <property type="match status" value="1"/>
</dbReference>
<dbReference type="Pfam" id="PF07678">
    <property type="entry name" value="TED_complement"/>
    <property type="match status" value="1"/>
</dbReference>
<dbReference type="SMART" id="SM01360">
    <property type="entry name" value="A2M"/>
    <property type="match status" value="1"/>
</dbReference>
<dbReference type="SMART" id="SM01359">
    <property type="entry name" value="A2M_N_2"/>
    <property type="match status" value="1"/>
</dbReference>
<dbReference type="SMART" id="SM01361">
    <property type="entry name" value="A2M_recep"/>
    <property type="match status" value="1"/>
</dbReference>
<dbReference type="SMART" id="SM01419">
    <property type="entry name" value="Thiol-ester_cl"/>
    <property type="match status" value="1"/>
</dbReference>
<dbReference type="SUPFAM" id="SSF49410">
    <property type="entry name" value="Alpha-macroglobulin receptor domain"/>
    <property type="match status" value="1"/>
</dbReference>
<dbReference type="SUPFAM" id="SSF81296">
    <property type="entry name" value="E set domains"/>
    <property type="match status" value="1"/>
</dbReference>
<dbReference type="SUPFAM" id="SSF48239">
    <property type="entry name" value="Terpenoid cyclases/Protein prenyltransferases"/>
    <property type="match status" value="1"/>
</dbReference>
<dbReference type="PROSITE" id="PS00477">
    <property type="entry name" value="ALPHA_2_MACROGLOBULIN"/>
    <property type="match status" value="1"/>
</dbReference>